<organism>
    <name type="scientific">Alteromonas mediterranea (strain DSM 17117 / CIP 110805 / LMG 28347 / Deep ecotype)</name>
    <dbReference type="NCBI Taxonomy" id="1774373"/>
    <lineage>
        <taxon>Bacteria</taxon>
        <taxon>Pseudomonadati</taxon>
        <taxon>Pseudomonadota</taxon>
        <taxon>Gammaproteobacteria</taxon>
        <taxon>Alteromonadales</taxon>
        <taxon>Alteromonadaceae</taxon>
        <taxon>Alteromonas/Salinimonas group</taxon>
        <taxon>Alteromonas</taxon>
    </lineage>
</organism>
<feature type="chain" id="PRO_1000184119" description="Large ribosomal subunit protein uL30">
    <location>
        <begin position="1"/>
        <end position="59"/>
    </location>
</feature>
<proteinExistence type="inferred from homology"/>
<accession>B4RT46</accession>
<accession>F2GAJ4</accession>
<keyword id="KW-0687">Ribonucleoprotein</keyword>
<keyword id="KW-0689">Ribosomal protein</keyword>
<name>RL30_ALTMD</name>
<dbReference type="EMBL" id="CP001103">
    <property type="protein sequence ID" value="AEA98928.1"/>
    <property type="molecule type" value="Genomic_DNA"/>
</dbReference>
<dbReference type="RefSeq" id="WP_012519220.1">
    <property type="nucleotide sequence ID" value="NC_011138.3"/>
</dbReference>
<dbReference type="SMR" id="B4RT46"/>
<dbReference type="GeneID" id="56343828"/>
<dbReference type="KEGG" id="amc:MADE_1013970"/>
<dbReference type="HOGENOM" id="CLU_131047_1_4_6"/>
<dbReference type="Proteomes" id="UP000001870">
    <property type="component" value="Chromosome"/>
</dbReference>
<dbReference type="GO" id="GO:0022625">
    <property type="term" value="C:cytosolic large ribosomal subunit"/>
    <property type="evidence" value="ECO:0007669"/>
    <property type="project" value="TreeGrafter"/>
</dbReference>
<dbReference type="GO" id="GO:0003735">
    <property type="term" value="F:structural constituent of ribosome"/>
    <property type="evidence" value="ECO:0007669"/>
    <property type="project" value="InterPro"/>
</dbReference>
<dbReference type="GO" id="GO:0006412">
    <property type="term" value="P:translation"/>
    <property type="evidence" value="ECO:0007669"/>
    <property type="project" value="UniProtKB-UniRule"/>
</dbReference>
<dbReference type="CDD" id="cd01658">
    <property type="entry name" value="Ribosomal_L30"/>
    <property type="match status" value="1"/>
</dbReference>
<dbReference type="FunFam" id="3.30.1390.20:FF:000001">
    <property type="entry name" value="50S ribosomal protein L30"/>
    <property type="match status" value="1"/>
</dbReference>
<dbReference type="Gene3D" id="3.30.1390.20">
    <property type="entry name" value="Ribosomal protein L30, ferredoxin-like fold domain"/>
    <property type="match status" value="1"/>
</dbReference>
<dbReference type="HAMAP" id="MF_01371_B">
    <property type="entry name" value="Ribosomal_uL30_B"/>
    <property type="match status" value="1"/>
</dbReference>
<dbReference type="InterPro" id="IPR036919">
    <property type="entry name" value="Ribo_uL30_ferredoxin-like_sf"/>
</dbReference>
<dbReference type="InterPro" id="IPR005996">
    <property type="entry name" value="Ribosomal_uL30_bac-type"/>
</dbReference>
<dbReference type="InterPro" id="IPR018038">
    <property type="entry name" value="Ribosomal_uL30_CS"/>
</dbReference>
<dbReference type="InterPro" id="IPR016082">
    <property type="entry name" value="Ribosomal_uL30_ferredoxin-like"/>
</dbReference>
<dbReference type="NCBIfam" id="TIGR01308">
    <property type="entry name" value="rpmD_bact"/>
    <property type="match status" value="1"/>
</dbReference>
<dbReference type="PANTHER" id="PTHR15892:SF2">
    <property type="entry name" value="LARGE RIBOSOMAL SUBUNIT PROTEIN UL30M"/>
    <property type="match status" value="1"/>
</dbReference>
<dbReference type="PANTHER" id="PTHR15892">
    <property type="entry name" value="MITOCHONDRIAL RIBOSOMAL PROTEIN L30"/>
    <property type="match status" value="1"/>
</dbReference>
<dbReference type="Pfam" id="PF00327">
    <property type="entry name" value="Ribosomal_L30"/>
    <property type="match status" value="1"/>
</dbReference>
<dbReference type="PIRSF" id="PIRSF002211">
    <property type="entry name" value="Ribosomal_L30_bac-type"/>
    <property type="match status" value="1"/>
</dbReference>
<dbReference type="SUPFAM" id="SSF55129">
    <property type="entry name" value="Ribosomal protein L30p/L7e"/>
    <property type="match status" value="1"/>
</dbReference>
<dbReference type="PROSITE" id="PS00634">
    <property type="entry name" value="RIBOSOMAL_L30"/>
    <property type="match status" value="1"/>
</dbReference>
<gene>
    <name evidence="1" type="primary">rpmD</name>
    <name type="ordered locus">MADE_1013970</name>
</gene>
<protein>
    <recommendedName>
        <fullName evidence="1">Large ribosomal subunit protein uL30</fullName>
    </recommendedName>
    <alternativeName>
        <fullName evidence="2">50S ribosomal protein L30</fullName>
    </alternativeName>
</protein>
<sequence>MATIKVKQTKSAIGRLPKHKATLKGLGLRKINHVRELEDTPAVRGMINRVHYMVEIVEE</sequence>
<reference key="1">
    <citation type="journal article" date="2008" name="ISME J.">
        <title>Comparative genomics of two ecotypes of the marine planktonic copiotroph Alteromonas macleodii suggests alternative lifestyles associated with different kinds of particulate organic matter.</title>
        <authorList>
            <person name="Ivars-Martinez E."/>
            <person name="Martin-Cuadrado A.-B."/>
            <person name="D'Auria G."/>
            <person name="Mira A."/>
            <person name="Ferriera S."/>
            <person name="Johnson J."/>
            <person name="Friedman R."/>
            <person name="Rodriguez-Valera F."/>
        </authorList>
    </citation>
    <scope>NUCLEOTIDE SEQUENCE [LARGE SCALE GENOMIC DNA]</scope>
    <source>
        <strain>DSM 17117 / CIP 110805 / LMG 28347 / Deep ecotype</strain>
    </source>
</reference>
<comment type="subunit">
    <text evidence="1">Part of the 50S ribosomal subunit.</text>
</comment>
<comment type="similarity">
    <text evidence="1">Belongs to the universal ribosomal protein uL30 family.</text>
</comment>
<evidence type="ECO:0000255" key="1">
    <source>
        <dbReference type="HAMAP-Rule" id="MF_01371"/>
    </source>
</evidence>
<evidence type="ECO:0000305" key="2"/>